<sequence>RRARYKKEPVSLTLALLLGGLTMGGIAAGVGTGTTALVATQQFQQLQAAIHDDLKEVEKSITNLEKSLTSLSEVVLQNRRGLDLLFLKEGGLCAALKEECCFYADHTGLVRDSMAKLRERLSQRQKLFESQQGWFEGLFNKSPWFTTLISTVMGPLIILLLILLFGPCILNRLVQFIKDRISVVQALVLTQQYHQLKTIGD</sequence>
<gene>
    <name type="primary">env</name>
</gene>
<reference key="1">
    <citation type="journal article" date="1984" name="Nucleic Acids Res.">
        <title>Genesis of Kirsten murine sarcoma virus: sequence analysis reveals recombination points and potential leukaemogenic determinant on parental leukaemia virus genome.</title>
        <authorList>
            <person name="Norton J.D."/>
            <person name="Connor J."/>
            <person name="Avery R.J."/>
        </authorList>
    </citation>
    <scope>NUCLEOTIDE SEQUENCE [GENOMIC RNA]</scope>
</reference>
<accession>P04502</accession>
<evidence type="ECO:0000250" key="1"/>
<evidence type="ECO:0000255" key="2"/>
<proteinExistence type="inferred from homology"/>
<protein>
    <recommendedName>
        <fullName>Envelope glycoprotein</fullName>
    </recommendedName>
    <alternativeName>
        <fullName>Env polyprotein</fullName>
    </alternativeName>
    <component>
        <recommendedName>
            <fullName>Surface protein</fullName>
            <shortName>SU</shortName>
        </recommendedName>
        <alternativeName>
            <fullName>Glycoprotein 70</fullName>
            <shortName>gp70</shortName>
        </alternativeName>
    </component>
    <component>
        <recommendedName>
            <fullName>Transmembrane protein</fullName>
            <shortName>TM</shortName>
        </recommendedName>
        <alternativeName>
            <fullName>Envelope protein p15E</fullName>
        </alternativeName>
    </component>
    <component>
        <recommendedName>
            <fullName>R-peptide</fullName>
        </recommendedName>
        <alternativeName>
            <fullName>p2E</fullName>
        </alternativeName>
    </component>
</protein>
<dbReference type="EMBL" id="X00982">
    <property type="protein sequence ID" value="CAA25490.1"/>
    <property type="molecule type" value="Genomic_RNA"/>
</dbReference>
<dbReference type="PIR" id="A03985">
    <property type="entry name" value="A03985"/>
</dbReference>
<dbReference type="SMR" id="P04502"/>
<dbReference type="GO" id="GO:0020002">
    <property type="term" value="C:host cell plasma membrane"/>
    <property type="evidence" value="ECO:0007669"/>
    <property type="project" value="UniProtKB-SubCell"/>
</dbReference>
<dbReference type="GO" id="GO:0016020">
    <property type="term" value="C:membrane"/>
    <property type="evidence" value="ECO:0007669"/>
    <property type="project" value="UniProtKB-KW"/>
</dbReference>
<dbReference type="GO" id="GO:0019031">
    <property type="term" value="C:viral envelope"/>
    <property type="evidence" value="ECO:0007669"/>
    <property type="project" value="UniProtKB-KW"/>
</dbReference>
<dbReference type="GO" id="GO:0055036">
    <property type="term" value="C:virion membrane"/>
    <property type="evidence" value="ECO:0007669"/>
    <property type="project" value="UniProtKB-SubCell"/>
</dbReference>
<dbReference type="GO" id="GO:0046872">
    <property type="term" value="F:metal ion binding"/>
    <property type="evidence" value="ECO:0007669"/>
    <property type="project" value="UniProtKB-KW"/>
</dbReference>
<dbReference type="GO" id="GO:0019064">
    <property type="term" value="P:fusion of virus membrane with host plasma membrane"/>
    <property type="evidence" value="ECO:0007669"/>
    <property type="project" value="UniProtKB-KW"/>
</dbReference>
<dbReference type="GO" id="GO:0046718">
    <property type="term" value="P:symbiont entry into host cell"/>
    <property type="evidence" value="ECO:0007669"/>
    <property type="project" value="UniProtKB-KW"/>
</dbReference>
<dbReference type="GO" id="GO:0019062">
    <property type="term" value="P:virion attachment to host cell"/>
    <property type="evidence" value="ECO:0007669"/>
    <property type="project" value="UniProtKB-KW"/>
</dbReference>
<dbReference type="CDD" id="cd09851">
    <property type="entry name" value="HTLV-1-like_HR1-HR2"/>
    <property type="match status" value="1"/>
</dbReference>
<dbReference type="FunFam" id="1.10.287.210:FF:000005">
    <property type="entry name" value="Envelope glycoprotein"/>
    <property type="match status" value="1"/>
</dbReference>
<dbReference type="Gene3D" id="1.10.287.210">
    <property type="match status" value="1"/>
</dbReference>
<dbReference type="InterPro" id="IPR018154">
    <property type="entry name" value="TLV/ENV_coat_polyprotein"/>
</dbReference>
<dbReference type="PANTHER" id="PTHR10424:SF72">
    <property type="entry name" value="BC035947 PROTEIN-RELATED"/>
    <property type="match status" value="1"/>
</dbReference>
<dbReference type="PANTHER" id="PTHR10424">
    <property type="entry name" value="VIRAL ENVELOPE PROTEIN"/>
    <property type="match status" value="1"/>
</dbReference>
<dbReference type="Pfam" id="PF00429">
    <property type="entry name" value="TLV_coat"/>
    <property type="match status" value="1"/>
</dbReference>
<dbReference type="SUPFAM" id="SSF58069">
    <property type="entry name" value="Virus ectodomain"/>
    <property type="match status" value="1"/>
</dbReference>
<organismHost>
    <name type="scientific">Mus musculus</name>
    <name type="common">Mouse</name>
    <dbReference type="NCBI Taxonomy" id="10090"/>
</organismHost>
<keyword id="KW-0165">Cleavage on pair of basic residues</keyword>
<keyword id="KW-0175">Coiled coil</keyword>
<keyword id="KW-1015">Disulfide bond</keyword>
<keyword id="KW-1169">Fusion of virus membrane with host cell membrane</keyword>
<keyword id="KW-1168">Fusion of virus membrane with host membrane</keyword>
<keyword id="KW-0325">Glycoprotein</keyword>
<keyword id="KW-1032">Host cell membrane</keyword>
<keyword id="KW-1043">Host membrane</keyword>
<keyword id="KW-0945">Host-virus interaction</keyword>
<keyword id="KW-0449">Lipoprotein</keyword>
<keyword id="KW-0472">Membrane</keyword>
<keyword id="KW-0479">Metal-binding</keyword>
<keyword id="KW-0564">Palmitate</keyword>
<keyword id="KW-0812">Transmembrane</keyword>
<keyword id="KW-1133">Transmembrane helix</keyword>
<keyword id="KW-1161">Viral attachment to host cell</keyword>
<keyword id="KW-0261">Viral envelope protein</keyword>
<keyword id="KW-1162">Viral penetration into host cytoplasm</keyword>
<keyword id="KW-0946">Virion</keyword>
<keyword id="KW-1160">Virus entry into host cell</keyword>
<keyword id="KW-0862">Zinc</keyword>
<feature type="chain" id="PRO_0000239587" description="Envelope glycoprotein">
    <location>
        <begin position="1" status="less than"/>
        <end position="201"/>
    </location>
</feature>
<feature type="chain" id="PRO_0000040762" description="Surface protein">
    <location>
        <begin position="1" status="less than"/>
        <end position="7"/>
    </location>
</feature>
<feature type="chain" id="PRO_0000040763" description="Transmembrane protein">
    <location>
        <begin position="8"/>
        <end position="187"/>
    </location>
</feature>
<feature type="peptide" id="PRO_0000040764" description="R-peptide" evidence="1">
    <location>
        <begin position="188"/>
        <end position="201"/>
    </location>
</feature>
<feature type="topological domain" description="Extracellular" evidence="2">
    <location>
        <begin position="1" status="less than"/>
        <end position="148"/>
    </location>
</feature>
<feature type="transmembrane region" description="Helical" evidence="2">
    <location>
        <begin position="149"/>
        <end position="169"/>
    </location>
</feature>
<feature type="topological domain" description="Cytoplasmic" evidence="2">
    <location>
        <begin position="170"/>
        <end position="201"/>
    </location>
</feature>
<feature type="region of interest" description="Fusion peptide" evidence="1">
    <location>
        <begin position="10"/>
        <end position="30"/>
    </location>
</feature>
<feature type="region of interest" description="Immunosuppression" evidence="1">
    <location>
        <begin position="76"/>
        <end position="92"/>
    </location>
</feature>
<feature type="coiled-coil region" evidence="2">
    <location>
        <begin position="39"/>
        <end position="75"/>
    </location>
</feature>
<feature type="short sequence motif" description="CX6CC">
    <location>
        <begin position="93"/>
        <end position="101"/>
    </location>
</feature>
<feature type="short sequence motif" description="YXXL motif; contains endocytosis signal" evidence="1">
    <location>
        <begin position="193"/>
        <end position="196"/>
    </location>
</feature>
<feature type="site" description="Cleavage; by host" evidence="1">
    <location>
        <begin position="7"/>
        <end position="8"/>
    </location>
</feature>
<feature type="site" description="Cleavage; by viral protease p14" evidence="1">
    <location>
        <begin position="187"/>
        <end position="188"/>
    </location>
</feature>
<feature type="lipid moiety-binding region" description="S-palmitoyl cysteine; by host" evidence="1">
    <location>
        <position position="168"/>
    </location>
</feature>
<feature type="non-terminal residue">
    <location>
        <position position="1"/>
    </location>
</feature>
<comment type="function">
    <text evidence="1">The surface protein (SU) attaches the virus to the host cell by binding to its receptor. This interaction triggers the refolding of the transmembrane protein (TM) and is thought to activate its fusogenic potential by unmasking its fusion peptide. Fusion occurs at the host cell plasma membrane (By similarity).</text>
</comment>
<comment type="function">
    <text evidence="1">The transmembrane protein (TM) acts as a class I viral fusion protein. Under the current model, the protein has at least 3 conformational states: pre-fusion native state, pre-hairpin intermediate state, and post-fusion hairpin state. During viral and target cell membrane fusion, the coiled coil regions (heptad repeats) assume a trimer-of-hairpins structure, positioning the fusion peptide in close proximity to the C-terminal region of the ectodomain. The formation of this structure appears to drive apposition and subsequent fusion of viral and target cell membranes. Membranes fusion leads to delivery of the nucleocapsid into the cytoplasm (By similarity).</text>
</comment>
<comment type="subunit">
    <text evidence="1">The mature envelope protein (Env) consists of a trimer of SU-TM heterodimers attached by a labile interchain disulfide bond.</text>
</comment>
<comment type="subcellular location">
    <molecule>Transmembrane protein</molecule>
    <subcellularLocation>
        <location evidence="1">Virion membrane</location>
        <topology evidence="1">Single-pass type I membrane protein</topology>
    </subcellularLocation>
    <subcellularLocation>
        <location evidence="1">Host cell membrane</location>
        <topology evidence="1">Single-pass type I membrane protein</topology>
    </subcellularLocation>
</comment>
<comment type="subcellular location">
    <molecule>Surface protein</molecule>
    <subcellularLocation>
        <location>Virion membrane</location>
        <topology>Peripheral membrane protein</topology>
    </subcellularLocation>
    <subcellularLocation>
        <location evidence="1">Host cell membrane</location>
        <topology evidence="1">Peripheral membrane protein</topology>
    </subcellularLocation>
    <text evidence="1">The surface protein is not anchored to the viral envelope, but associates with the virion surface through its binding to TM. Both proteins are thought to be concentrated at the site of budding and incorporated into the virions possibly by contacts between the cytoplasmic tail of Env and the N-terminus of Gag (By similarity).</text>
</comment>
<comment type="subcellular location">
    <molecule>R-peptide</molecule>
    <subcellularLocation>
        <location evidence="1">Host cell membrane</location>
        <topology evidence="1">Peripheral membrane protein</topology>
    </subcellularLocation>
    <text evidence="1">The R-peptide is membrane-associated through its palmitate.</text>
</comment>
<comment type="domain">
    <text>The YXXL motif is involved in determining the exact site of viral release at the surface of infected mononuclear cells and promotes endocytosis.</text>
</comment>
<comment type="domain">
    <text evidence="1">The 17 amino acids long immunosuppressive region is present in many retroviral envelope proteins. Synthetic peptides derived from this relatively conserved sequence inhibit immune function in vitro and in vivo (By similarity).</text>
</comment>
<comment type="PTM">
    <text evidence="1">Specific enzymatic cleavages in vivo yield mature proteins. Envelope glycoproteins are synthesized as an inactive precursor that is N-glycosylated and processed likely by host cell furin or by a furin-like protease in the Golgi to yield the mature SU and TM proteins. The cleavage site between SU and TM requires the minimal sequence [KR]-X-[KR]-R. The R-peptide is released from the C-terminus of the cytoplasmic tail of the TM protein upon particle formation as a result of proteolytic cleavage by the viral protease. Cleavage of this peptide is required for TM to become fusogenic (By similarity).</text>
</comment>
<comment type="PTM">
    <text evidence="1">The transmembrane protein is palmitoylated.</text>
</comment>
<comment type="PTM">
    <text evidence="1">The R-peptide is palmitoylated.</text>
</comment>
<organism>
    <name type="scientific">Kirsten murine leukemia virus</name>
    <name type="common">KiMSV</name>
    <dbReference type="NCBI Taxonomy" id="11800"/>
    <lineage>
        <taxon>Viruses</taxon>
        <taxon>Riboviria</taxon>
        <taxon>Pararnavirae</taxon>
        <taxon>Artverviricota</taxon>
        <taxon>Revtraviricetes</taxon>
        <taxon>Ortervirales</taxon>
        <taxon>Retroviridae</taxon>
        <taxon>Orthoretrovirinae</taxon>
        <taxon>Gammaretrovirus</taxon>
        <taxon>Murine leukemia virus</taxon>
    </lineage>
</organism>
<name>ENV_MLVKI</name>